<protein>
    <recommendedName>
        <fullName evidence="1">DNA primase small subunit PriS</fullName>
        <ecNumber evidence="1">2.7.7.-</ecNumber>
    </recommendedName>
</protein>
<organism>
    <name type="scientific">Pyrobaculum calidifontis (strain DSM 21063 / JCM 11548 / VA1)</name>
    <dbReference type="NCBI Taxonomy" id="410359"/>
    <lineage>
        <taxon>Archaea</taxon>
        <taxon>Thermoproteota</taxon>
        <taxon>Thermoprotei</taxon>
        <taxon>Thermoproteales</taxon>
        <taxon>Thermoproteaceae</taxon>
        <taxon>Pyrobaculum</taxon>
    </lineage>
</organism>
<feature type="chain" id="PRO_1000045510" description="DNA primase small subunit PriS">
    <location>
        <begin position="1"/>
        <end position="312"/>
    </location>
</feature>
<feature type="active site" evidence="1">
    <location>
        <position position="88"/>
    </location>
</feature>
<feature type="active site" evidence="1">
    <location>
        <position position="90"/>
    </location>
</feature>
<feature type="active site" evidence="1">
    <location>
        <position position="215"/>
    </location>
</feature>
<dbReference type="EC" id="2.7.7.-" evidence="1"/>
<dbReference type="EMBL" id="CP000561">
    <property type="protein sequence ID" value="ABO08416.1"/>
    <property type="molecule type" value="Genomic_DNA"/>
</dbReference>
<dbReference type="RefSeq" id="WP_011849674.1">
    <property type="nucleotide sequence ID" value="NC_009073.1"/>
</dbReference>
<dbReference type="SMR" id="A3MUU9"/>
<dbReference type="STRING" id="410359.Pcal_0991"/>
<dbReference type="GeneID" id="4909914"/>
<dbReference type="KEGG" id="pcl:Pcal_0991"/>
<dbReference type="eggNOG" id="arCOG04110">
    <property type="taxonomic scope" value="Archaea"/>
</dbReference>
<dbReference type="HOGENOM" id="CLU_056123_1_0_2"/>
<dbReference type="OrthoDB" id="31125at2157"/>
<dbReference type="Proteomes" id="UP000001431">
    <property type="component" value="Chromosome"/>
</dbReference>
<dbReference type="GO" id="GO:0000428">
    <property type="term" value="C:DNA-directed RNA polymerase complex"/>
    <property type="evidence" value="ECO:0007669"/>
    <property type="project" value="UniProtKB-KW"/>
</dbReference>
<dbReference type="GO" id="GO:1990077">
    <property type="term" value="C:primosome complex"/>
    <property type="evidence" value="ECO:0007669"/>
    <property type="project" value="UniProtKB-KW"/>
</dbReference>
<dbReference type="GO" id="GO:0003899">
    <property type="term" value="F:DNA-directed RNA polymerase activity"/>
    <property type="evidence" value="ECO:0007669"/>
    <property type="project" value="InterPro"/>
</dbReference>
<dbReference type="GO" id="GO:0046872">
    <property type="term" value="F:metal ion binding"/>
    <property type="evidence" value="ECO:0007669"/>
    <property type="project" value="UniProtKB-KW"/>
</dbReference>
<dbReference type="GO" id="GO:0006269">
    <property type="term" value="P:DNA replication, synthesis of primer"/>
    <property type="evidence" value="ECO:0007669"/>
    <property type="project" value="UniProtKB-UniRule"/>
</dbReference>
<dbReference type="CDD" id="cd04860">
    <property type="entry name" value="AE_Prim_S"/>
    <property type="match status" value="1"/>
</dbReference>
<dbReference type="Gene3D" id="3.90.920.10">
    <property type="entry name" value="DNA primase, PRIM domain"/>
    <property type="match status" value="1"/>
</dbReference>
<dbReference type="HAMAP" id="MF_00700">
    <property type="entry name" value="DNA_primase_sml_arc"/>
    <property type="match status" value="1"/>
</dbReference>
<dbReference type="InterPro" id="IPR002755">
    <property type="entry name" value="DNA_primase_S"/>
</dbReference>
<dbReference type="InterPro" id="IPR014052">
    <property type="entry name" value="DNA_primase_ssu_euk/arc"/>
</dbReference>
<dbReference type="InterPro" id="IPR023639">
    <property type="entry name" value="DNA_primase_ssu_PriS"/>
</dbReference>
<dbReference type="NCBIfam" id="TIGR00335">
    <property type="entry name" value="primase_sml"/>
    <property type="match status" value="1"/>
</dbReference>
<dbReference type="PANTHER" id="PTHR10536">
    <property type="entry name" value="DNA PRIMASE SMALL SUBUNIT"/>
    <property type="match status" value="1"/>
</dbReference>
<dbReference type="Pfam" id="PF01896">
    <property type="entry name" value="DNA_primase_S"/>
    <property type="match status" value="1"/>
</dbReference>
<dbReference type="SUPFAM" id="SSF56747">
    <property type="entry name" value="Prim-pol domain"/>
    <property type="match status" value="1"/>
</dbReference>
<comment type="function">
    <text evidence="1">Catalytic subunit of DNA primase, an RNA polymerase that catalyzes the synthesis of short RNA molecules used as primers for DNA polymerase during DNA replication. The small subunit contains the primase catalytic core and has DNA synthesis activity on its own. Binding to the large subunit stabilizes and modulates the activity, increasing the rate of DNA synthesis while decreasing the length of the DNA fragments, and conferring RNA synthesis capability. The DNA polymerase activity may enable DNA primase to also catalyze primer extension after primer synthesis. May also play a role in DNA repair.</text>
</comment>
<comment type="cofactor">
    <cofactor evidence="1">
        <name>Mg(2+)</name>
        <dbReference type="ChEBI" id="CHEBI:18420"/>
    </cofactor>
    <cofactor evidence="1">
        <name>Mn(2+)</name>
        <dbReference type="ChEBI" id="CHEBI:29035"/>
    </cofactor>
</comment>
<comment type="subunit">
    <text evidence="1">Heterodimer of a small subunit (PriS) and a large subunit (PriL).</text>
</comment>
<comment type="similarity">
    <text evidence="1">Belongs to the eukaryotic-type primase small subunit family.</text>
</comment>
<reference key="1">
    <citation type="submission" date="2007-02" db="EMBL/GenBank/DDBJ databases">
        <title>Complete sequence of Pyrobaculum calidifontis JCM 11548.</title>
        <authorList>
            <consortium name="US DOE Joint Genome Institute"/>
            <person name="Copeland A."/>
            <person name="Lucas S."/>
            <person name="Lapidus A."/>
            <person name="Barry K."/>
            <person name="Glavina del Rio T."/>
            <person name="Dalin E."/>
            <person name="Tice H."/>
            <person name="Pitluck S."/>
            <person name="Chain P."/>
            <person name="Malfatti S."/>
            <person name="Shin M."/>
            <person name="Vergez L."/>
            <person name="Schmutz J."/>
            <person name="Larimer F."/>
            <person name="Land M."/>
            <person name="Hauser L."/>
            <person name="Kyrpides N."/>
            <person name="Mikhailova N."/>
            <person name="Cozen A.E."/>
            <person name="Fitz-Gibbon S.T."/>
            <person name="House C.H."/>
            <person name="Saltikov C."/>
            <person name="Lowe T.M."/>
            <person name="Richardson P."/>
        </authorList>
    </citation>
    <scope>NUCLEOTIDE SEQUENCE [LARGE SCALE GENOMIC DNA]</scope>
    <source>
        <strain>DSM 21063 / JCM 11548 / VA1</strain>
    </source>
</reference>
<proteinExistence type="inferred from homology"/>
<sequence>MIVEVFFRNYYRNYAKLEVDEVEKREFAFQPFVGGMVRHKAFKNLEELKRHLVEKTPRHVYYSTARYERPWEEDMERKGWLGADLVFDIDGDHLDTEACRESKVVSLACLEDAKEEANKLIDVLTEELGLKPTKVVFSGNRGFHVHVVDEEVLALGQKERRELVNYLKAVGFDPSKFHMKVGRRKVVLYEEEAVGNLLRIRRGIEDPEALKVEVDEVVTQDVHRLIRAPGSLNGKTGLVALPLSVRDLEKEVAHIVERAIAFRKGNLRLRFEKPFQGTVLFEKVEAREGDIKTLPAHVAIYLELQEFGKIYD</sequence>
<evidence type="ECO:0000255" key="1">
    <source>
        <dbReference type="HAMAP-Rule" id="MF_00700"/>
    </source>
</evidence>
<keyword id="KW-0235">DNA replication</keyword>
<keyword id="KW-0240">DNA-directed RNA polymerase</keyword>
<keyword id="KW-0460">Magnesium</keyword>
<keyword id="KW-0464">Manganese</keyword>
<keyword id="KW-0479">Metal-binding</keyword>
<keyword id="KW-0548">Nucleotidyltransferase</keyword>
<keyword id="KW-0639">Primosome</keyword>
<keyword id="KW-0804">Transcription</keyword>
<keyword id="KW-0808">Transferase</keyword>
<name>PRIS_PYRCJ</name>
<accession>A3MUU9</accession>
<gene>
    <name evidence="1" type="primary">priS</name>
    <name type="synonym">priA</name>
    <name type="ordered locus">Pcal_0991</name>
</gene>